<comment type="function">
    <text evidence="1">Catalyzes the formation of sulfite from phosphoadenosine 5'-phosphosulfate (PAPS) using thioredoxin as an electron donor.</text>
</comment>
<comment type="catalytic activity">
    <reaction evidence="1">
        <text>[thioredoxin]-disulfide + sulfite + adenosine 3',5'-bisphosphate + 2 H(+) = [thioredoxin]-dithiol + 3'-phosphoadenylyl sulfate</text>
        <dbReference type="Rhea" id="RHEA:11724"/>
        <dbReference type="Rhea" id="RHEA-COMP:10698"/>
        <dbReference type="Rhea" id="RHEA-COMP:10700"/>
        <dbReference type="ChEBI" id="CHEBI:15378"/>
        <dbReference type="ChEBI" id="CHEBI:17359"/>
        <dbReference type="ChEBI" id="CHEBI:29950"/>
        <dbReference type="ChEBI" id="CHEBI:50058"/>
        <dbReference type="ChEBI" id="CHEBI:58339"/>
        <dbReference type="ChEBI" id="CHEBI:58343"/>
        <dbReference type="EC" id="1.8.4.8"/>
    </reaction>
</comment>
<comment type="pathway">
    <text evidence="1">Sulfur metabolism; hydrogen sulfide biosynthesis; sulfite from sulfate: step 3/3.</text>
</comment>
<comment type="subcellular location">
    <subcellularLocation>
        <location evidence="1">Cytoplasm</location>
    </subcellularLocation>
</comment>
<comment type="similarity">
    <text evidence="1 2">Belongs to the PAPS reductase family. CysH subfamily.</text>
</comment>
<sequence>MSHTLTKLDLPTLQTELENATAQQIITWAAQTFGPGLVMSTSFGIQAAVMLHLVTSIVPNIPVIWIDTGYLPLETYQFADQLTGRLQLNLKVYQSPLSPARMEALYGKLWQQKDVESLNRYDQIRKVEPMQRALKELEAIAWLTGLRRDQTRHRQNLKPVDLQGNQYKVLPILDWNSKMVYEYLTAHDLPYHPFFDQGYVSVGDWHSSRPLMAHDEDERDTRFHGLKQECGLHLPLSPEAGQSLDSSAL</sequence>
<keyword id="KW-0963">Cytoplasm</keyword>
<keyword id="KW-0560">Oxidoreductase</keyword>
<keyword id="KW-1185">Reference proteome</keyword>
<name>CYSH_SYNY3</name>
<evidence type="ECO:0000255" key="1">
    <source>
        <dbReference type="HAMAP-Rule" id="MF_00063"/>
    </source>
</evidence>
<evidence type="ECO:0000305" key="2"/>
<accession>P72794</accession>
<proteinExistence type="inferred from homology"/>
<gene>
    <name evidence="1" type="primary">cysH</name>
    <name type="ordered locus">slr1791</name>
</gene>
<dbReference type="EC" id="1.8.4.8" evidence="1"/>
<dbReference type="EMBL" id="BA000022">
    <property type="protein sequence ID" value="BAA16809.1"/>
    <property type="molecule type" value="Genomic_DNA"/>
</dbReference>
<dbReference type="PIR" id="S74657">
    <property type="entry name" value="S74657"/>
</dbReference>
<dbReference type="SMR" id="P72794"/>
<dbReference type="FunCoup" id="P72794">
    <property type="interactions" value="257"/>
</dbReference>
<dbReference type="IntAct" id="P72794">
    <property type="interactions" value="1"/>
</dbReference>
<dbReference type="STRING" id="1148.gene:10497665"/>
<dbReference type="PaxDb" id="1148-1651882"/>
<dbReference type="EnsemblBacteria" id="BAA16809">
    <property type="protein sequence ID" value="BAA16809"/>
    <property type="gene ID" value="BAA16809"/>
</dbReference>
<dbReference type="KEGG" id="syn:slr1791"/>
<dbReference type="eggNOG" id="COG0175">
    <property type="taxonomic scope" value="Bacteria"/>
</dbReference>
<dbReference type="InParanoid" id="P72794"/>
<dbReference type="PhylomeDB" id="P72794"/>
<dbReference type="UniPathway" id="UPA00140">
    <property type="reaction ID" value="UER00206"/>
</dbReference>
<dbReference type="Proteomes" id="UP000001425">
    <property type="component" value="Chromosome"/>
</dbReference>
<dbReference type="GO" id="GO:0005737">
    <property type="term" value="C:cytoplasm"/>
    <property type="evidence" value="ECO:0007669"/>
    <property type="project" value="UniProtKB-SubCell"/>
</dbReference>
<dbReference type="GO" id="GO:0004604">
    <property type="term" value="F:phosphoadenylyl-sulfate reductase (thioredoxin) activity"/>
    <property type="evidence" value="ECO:0000318"/>
    <property type="project" value="GO_Central"/>
</dbReference>
<dbReference type="GO" id="GO:0070814">
    <property type="term" value="P:hydrogen sulfide biosynthetic process"/>
    <property type="evidence" value="ECO:0007669"/>
    <property type="project" value="UniProtKB-UniRule"/>
</dbReference>
<dbReference type="GO" id="GO:0019379">
    <property type="term" value="P:sulfate assimilation, phosphoadenylyl sulfate reduction by phosphoadenylyl-sulfate reductase (thioredoxin)"/>
    <property type="evidence" value="ECO:0000318"/>
    <property type="project" value="GO_Central"/>
</dbReference>
<dbReference type="CDD" id="cd23945">
    <property type="entry name" value="PAPS_reductase"/>
    <property type="match status" value="1"/>
</dbReference>
<dbReference type="FunFam" id="3.40.50.620:FF:000043">
    <property type="entry name" value="Phosphoadenosine phosphosulfate reductase"/>
    <property type="match status" value="1"/>
</dbReference>
<dbReference type="Gene3D" id="3.40.50.620">
    <property type="entry name" value="HUPs"/>
    <property type="match status" value="1"/>
</dbReference>
<dbReference type="HAMAP" id="MF_00063">
    <property type="entry name" value="CysH"/>
    <property type="match status" value="1"/>
</dbReference>
<dbReference type="InterPro" id="IPR004511">
    <property type="entry name" value="PAPS/APS_Rdtase"/>
</dbReference>
<dbReference type="InterPro" id="IPR002500">
    <property type="entry name" value="PAPS_reduct_dom"/>
</dbReference>
<dbReference type="InterPro" id="IPR011800">
    <property type="entry name" value="PAPS_reductase_CysH"/>
</dbReference>
<dbReference type="InterPro" id="IPR014729">
    <property type="entry name" value="Rossmann-like_a/b/a_fold"/>
</dbReference>
<dbReference type="NCBIfam" id="TIGR00434">
    <property type="entry name" value="cysH"/>
    <property type="match status" value="1"/>
</dbReference>
<dbReference type="NCBIfam" id="TIGR02057">
    <property type="entry name" value="PAPS_reductase"/>
    <property type="match status" value="1"/>
</dbReference>
<dbReference type="NCBIfam" id="NF002537">
    <property type="entry name" value="PRK02090.1"/>
    <property type="match status" value="1"/>
</dbReference>
<dbReference type="PANTHER" id="PTHR46509">
    <property type="entry name" value="PHOSPHOADENOSINE PHOSPHOSULFATE REDUCTASE"/>
    <property type="match status" value="1"/>
</dbReference>
<dbReference type="PANTHER" id="PTHR46509:SF1">
    <property type="entry name" value="PHOSPHOADENOSINE PHOSPHOSULFATE REDUCTASE"/>
    <property type="match status" value="1"/>
</dbReference>
<dbReference type="Pfam" id="PF01507">
    <property type="entry name" value="PAPS_reduct"/>
    <property type="match status" value="1"/>
</dbReference>
<dbReference type="PIRSF" id="PIRSF000857">
    <property type="entry name" value="PAPS_reductase"/>
    <property type="match status" value="1"/>
</dbReference>
<dbReference type="SUPFAM" id="SSF52402">
    <property type="entry name" value="Adenine nucleotide alpha hydrolases-like"/>
    <property type="match status" value="1"/>
</dbReference>
<protein>
    <recommendedName>
        <fullName evidence="1">Phosphoadenosine 5'-phosphosulfate reductase</fullName>
        <shortName evidence="1">PAPS reductase</shortName>
        <ecNumber evidence="1">1.8.4.8</ecNumber>
    </recommendedName>
    <alternativeName>
        <fullName evidence="1">3'-phosphoadenylylsulfate reductase</fullName>
    </alternativeName>
    <alternativeName>
        <fullName evidence="1">PAPS reductase, thioredoxin dependent</fullName>
    </alternativeName>
    <alternativeName>
        <fullName evidence="1">PAPS sulfotransferase</fullName>
    </alternativeName>
    <alternativeName>
        <fullName evidence="1">PAdoPS reductase</fullName>
    </alternativeName>
</protein>
<organism>
    <name type="scientific">Synechocystis sp. (strain ATCC 27184 / PCC 6803 / Kazusa)</name>
    <dbReference type="NCBI Taxonomy" id="1111708"/>
    <lineage>
        <taxon>Bacteria</taxon>
        <taxon>Bacillati</taxon>
        <taxon>Cyanobacteriota</taxon>
        <taxon>Cyanophyceae</taxon>
        <taxon>Synechococcales</taxon>
        <taxon>Merismopediaceae</taxon>
        <taxon>Synechocystis</taxon>
    </lineage>
</organism>
<feature type="chain" id="PRO_0000100650" description="Phosphoadenosine 5'-phosphosulfate reductase">
    <location>
        <begin position="1"/>
        <end position="249"/>
    </location>
</feature>
<feature type="active site" description="Nucleophile; cysteine thiosulfonate intermediate" evidence="1">
    <location>
        <position position="230"/>
    </location>
</feature>
<reference key="1">
    <citation type="journal article" date="1996" name="DNA Res.">
        <title>Sequence analysis of the genome of the unicellular cyanobacterium Synechocystis sp. strain PCC6803. II. Sequence determination of the entire genome and assignment of potential protein-coding regions.</title>
        <authorList>
            <person name="Kaneko T."/>
            <person name="Sato S."/>
            <person name="Kotani H."/>
            <person name="Tanaka A."/>
            <person name="Asamizu E."/>
            <person name="Nakamura Y."/>
            <person name="Miyajima N."/>
            <person name="Hirosawa M."/>
            <person name="Sugiura M."/>
            <person name="Sasamoto S."/>
            <person name="Kimura T."/>
            <person name="Hosouchi T."/>
            <person name="Matsuno A."/>
            <person name="Muraki A."/>
            <person name="Nakazaki N."/>
            <person name="Naruo K."/>
            <person name="Okumura S."/>
            <person name="Shimpo S."/>
            <person name="Takeuchi C."/>
            <person name="Wada T."/>
            <person name="Watanabe A."/>
            <person name="Yamada M."/>
            <person name="Yasuda M."/>
            <person name="Tabata S."/>
        </authorList>
    </citation>
    <scope>NUCLEOTIDE SEQUENCE [LARGE SCALE GENOMIC DNA]</scope>
    <source>
        <strain>ATCC 27184 / PCC 6803 / Kazusa</strain>
    </source>
</reference>